<proteinExistence type="inferred from homology"/>
<sequence length="312" mass="33480">MGMKRKKISIIGAGFTGATTAFILAQKELGDIVLVDIPQLENPTKGKALDMLESSPVLGFDANIIGTSDYADTADSDVVVITAGIARKPGMSRDDLVTTNQGIMKAVTKEVVKYSPNCFIIVLTNPVDAMTYTVFKESGFPKNRVIGQSGVLDTARFRTFVAQELNLSVKDITGFVLGGHGDDMVPLVRYSYAGGIPLETLIPKERLDAIVERTRKGGGEIVNLLGNGSAYYAPAASLAEMVEAIVKDQRRVLPAIAYLEGEYGYEGIYLGVPTILGGNGIEKVIELELTEEEKAALAKSVESVKNVMKVLQ</sequence>
<evidence type="ECO:0000255" key="1">
    <source>
        <dbReference type="HAMAP-Rule" id="MF_00487"/>
    </source>
</evidence>
<feature type="chain" id="PRO_1000126120" description="Malate dehydrogenase">
    <location>
        <begin position="1"/>
        <end position="312"/>
    </location>
</feature>
<feature type="active site" description="Proton acceptor" evidence="1">
    <location>
        <position position="180"/>
    </location>
</feature>
<feature type="binding site" evidence="1">
    <location>
        <begin position="12"/>
        <end position="17"/>
    </location>
    <ligand>
        <name>NAD(+)</name>
        <dbReference type="ChEBI" id="CHEBI:57540"/>
    </ligand>
</feature>
<feature type="binding site" evidence="1">
    <location>
        <position position="36"/>
    </location>
    <ligand>
        <name>NAD(+)</name>
        <dbReference type="ChEBI" id="CHEBI:57540"/>
    </ligand>
</feature>
<feature type="binding site" evidence="1">
    <location>
        <position position="87"/>
    </location>
    <ligand>
        <name>substrate</name>
    </ligand>
</feature>
<feature type="binding site" evidence="1">
    <location>
        <position position="93"/>
    </location>
    <ligand>
        <name>substrate</name>
    </ligand>
</feature>
<feature type="binding site" evidence="1">
    <location>
        <position position="100"/>
    </location>
    <ligand>
        <name>NAD(+)</name>
        <dbReference type="ChEBI" id="CHEBI:57540"/>
    </ligand>
</feature>
<feature type="binding site" evidence="1">
    <location>
        <begin position="123"/>
        <end position="125"/>
    </location>
    <ligand>
        <name>NAD(+)</name>
        <dbReference type="ChEBI" id="CHEBI:57540"/>
    </ligand>
</feature>
<feature type="binding site" evidence="1">
    <location>
        <position position="125"/>
    </location>
    <ligand>
        <name>substrate</name>
    </ligand>
</feature>
<feature type="binding site" evidence="1">
    <location>
        <position position="156"/>
    </location>
    <ligand>
        <name>substrate</name>
    </ligand>
</feature>
<feature type="modified residue" description="Phosphoserine" evidence="1">
    <location>
        <position position="149"/>
    </location>
</feature>
<protein>
    <recommendedName>
        <fullName evidence="1">Malate dehydrogenase</fullName>
        <ecNumber evidence="1">1.1.1.37</ecNumber>
    </recommendedName>
</protein>
<reference key="1">
    <citation type="journal article" date="2008" name="Genome Biol.">
        <title>Encapsulated in silica: genome, proteome and physiology of the thermophilic bacterium Anoxybacillus flavithermus WK1.</title>
        <authorList>
            <person name="Saw J.H."/>
            <person name="Mountain B.W."/>
            <person name="Feng L."/>
            <person name="Omelchenko M.V."/>
            <person name="Hou S."/>
            <person name="Saito J.A."/>
            <person name="Stott M.B."/>
            <person name="Li D."/>
            <person name="Zhao G."/>
            <person name="Wu J."/>
            <person name="Galperin M.Y."/>
            <person name="Koonin E.V."/>
            <person name="Makarova K.S."/>
            <person name="Wolf Y.I."/>
            <person name="Rigden D.J."/>
            <person name="Dunfield P.F."/>
            <person name="Wang L."/>
            <person name="Alam M."/>
        </authorList>
    </citation>
    <scope>NUCLEOTIDE SEQUENCE [LARGE SCALE GENOMIC DNA]</scope>
    <source>
        <strain>DSM 21510 / WK1</strain>
    </source>
</reference>
<accession>B7GGT8</accession>
<keyword id="KW-0520">NAD</keyword>
<keyword id="KW-0560">Oxidoreductase</keyword>
<keyword id="KW-0597">Phosphoprotein</keyword>
<keyword id="KW-0816">Tricarboxylic acid cycle</keyword>
<dbReference type="EC" id="1.1.1.37" evidence="1"/>
<dbReference type="EMBL" id="CP000922">
    <property type="protein sequence ID" value="ACJ32890.1"/>
    <property type="molecule type" value="Genomic_DNA"/>
</dbReference>
<dbReference type="RefSeq" id="WP_006320873.1">
    <property type="nucleotide sequence ID" value="NC_011567.1"/>
</dbReference>
<dbReference type="SMR" id="B7GGT8"/>
<dbReference type="STRING" id="491915.Aflv_0506"/>
<dbReference type="GeneID" id="7036763"/>
<dbReference type="KEGG" id="afl:Aflv_0506"/>
<dbReference type="eggNOG" id="COG0039">
    <property type="taxonomic scope" value="Bacteria"/>
</dbReference>
<dbReference type="HOGENOM" id="CLU_045401_2_1_9"/>
<dbReference type="Proteomes" id="UP000000742">
    <property type="component" value="Chromosome"/>
</dbReference>
<dbReference type="GO" id="GO:0004459">
    <property type="term" value="F:L-lactate dehydrogenase activity"/>
    <property type="evidence" value="ECO:0007669"/>
    <property type="project" value="TreeGrafter"/>
</dbReference>
<dbReference type="GO" id="GO:0030060">
    <property type="term" value="F:L-malate dehydrogenase (NAD+) activity"/>
    <property type="evidence" value="ECO:0007669"/>
    <property type="project" value="UniProtKB-UniRule"/>
</dbReference>
<dbReference type="GO" id="GO:0006089">
    <property type="term" value="P:lactate metabolic process"/>
    <property type="evidence" value="ECO:0007669"/>
    <property type="project" value="TreeGrafter"/>
</dbReference>
<dbReference type="GO" id="GO:0006099">
    <property type="term" value="P:tricarboxylic acid cycle"/>
    <property type="evidence" value="ECO:0007669"/>
    <property type="project" value="UniProtKB-UniRule"/>
</dbReference>
<dbReference type="CDD" id="cd01339">
    <property type="entry name" value="LDH-like_MDH"/>
    <property type="match status" value="1"/>
</dbReference>
<dbReference type="FunFam" id="3.40.50.720:FF:000018">
    <property type="entry name" value="Malate dehydrogenase"/>
    <property type="match status" value="1"/>
</dbReference>
<dbReference type="FunFam" id="3.90.110.10:FF:000004">
    <property type="entry name" value="Malate dehydrogenase"/>
    <property type="match status" value="1"/>
</dbReference>
<dbReference type="Gene3D" id="3.90.110.10">
    <property type="entry name" value="Lactate dehydrogenase/glycoside hydrolase, family 4, C-terminal"/>
    <property type="match status" value="1"/>
</dbReference>
<dbReference type="Gene3D" id="3.40.50.720">
    <property type="entry name" value="NAD(P)-binding Rossmann-like Domain"/>
    <property type="match status" value="1"/>
</dbReference>
<dbReference type="HAMAP" id="MF_00487">
    <property type="entry name" value="Malate_dehydrog_3"/>
    <property type="match status" value="1"/>
</dbReference>
<dbReference type="InterPro" id="IPR001557">
    <property type="entry name" value="L-lactate/malate_DH"/>
</dbReference>
<dbReference type="InterPro" id="IPR022383">
    <property type="entry name" value="Lactate/malate_DH_C"/>
</dbReference>
<dbReference type="InterPro" id="IPR001236">
    <property type="entry name" value="Lactate/malate_DH_N"/>
</dbReference>
<dbReference type="InterPro" id="IPR015955">
    <property type="entry name" value="Lactate_DH/Glyco_Ohase_4_C"/>
</dbReference>
<dbReference type="InterPro" id="IPR011275">
    <property type="entry name" value="Malate_DH_type3"/>
</dbReference>
<dbReference type="InterPro" id="IPR036291">
    <property type="entry name" value="NAD(P)-bd_dom_sf"/>
</dbReference>
<dbReference type="NCBIfam" id="TIGR01763">
    <property type="entry name" value="MalateDH_bact"/>
    <property type="match status" value="1"/>
</dbReference>
<dbReference type="NCBIfam" id="NF004863">
    <property type="entry name" value="PRK06223.1"/>
    <property type="match status" value="1"/>
</dbReference>
<dbReference type="PANTHER" id="PTHR43128">
    <property type="entry name" value="L-2-HYDROXYCARBOXYLATE DEHYDROGENASE (NAD(P)(+))"/>
    <property type="match status" value="1"/>
</dbReference>
<dbReference type="PANTHER" id="PTHR43128:SF16">
    <property type="entry name" value="L-LACTATE DEHYDROGENASE"/>
    <property type="match status" value="1"/>
</dbReference>
<dbReference type="Pfam" id="PF02866">
    <property type="entry name" value="Ldh_1_C"/>
    <property type="match status" value="1"/>
</dbReference>
<dbReference type="Pfam" id="PF00056">
    <property type="entry name" value="Ldh_1_N"/>
    <property type="match status" value="1"/>
</dbReference>
<dbReference type="PIRSF" id="PIRSF000102">
    <property type="entry name" value="Lac_mal_DH"/>
    <property type="match status" value="1"/>
</dbReference>
<dbReference type="PRINTS" id="PR00086">
    <property type="entry name" value="LLDHDRGNASE"/>
</dbReference>
<dbReference type="SUPFAM" id="SSF56327">
    <property type="entry name" value="LDH C-terminal domain-like"/>
    <property type="match status" value="1"/>
</dbReference>
<dbReference type="SUPFAM" id="SSF51735">
    <property type="entry name" value="NAD(P)-binding Rossmann-fold domains"/>
    <property type="match status" value="1"/>
</dbReference>
<comment type="function">
    <text evidence="1">Catalyzes the reversible oxidation of malate to oxaloacetate.</text>
</comment>
<comment type="catalytic activity">
    <reaction evidence="1">
        <text>(S)-malate + NAD(+) = oxaloacetate + NADH + H(+)</text>
        <dbReference type="Rhea" id="RHEA:21432"/>
        <dbReference type="ChEBI" id="CHEBI:15378"/>
        <dbReference type="ChEBI" id="CHEBI:15589"/>
        <dbReference type="ChEBI" id="CHEBI:16452"/>
        <dbReference type="ChEBI" id="CHEBI:57540"/>
        <dbReference type="ChEBI" id="CHEBI:57945"/>
        <dbReference type="EC" id="1.1.1.37"/>
    </reaction>
</comment>
<comment type="similarity">
    <text evidence="1">Belongs to the LDH/MDH superfamily. MDH type 3 family.</text>
</comment>
<gene>
    <name evidence="1" type="primary">mdh</name>
    <name type="ordered locus">Aflv_0506</name>
</gene>
<name>MDH_ANOFW</name>
<organism>
    <name type="scientific">Anoxybacillus flavithermus (strain DSM 21510 / WK1)</name>
    <dbReference type="NCBI Taxonomy" id="491915"/>
    <lineage>
        <taxon>Bacteria</taxon>
        <taxon>Bacillati</taxon>
        <taxon>Bacillota</taxon>
        <taxon>Bacilli</taxon>
        <taxon>Bacillales</taxon>
        <taxon>Anoxybacillaceae</taxon>
        <taxon>Anoxybacillus</taxon>
    </lineage>
</organism>